<name>RECR_SODGM</name>
<proteinExistence type="inferred from homology"/>
<gene>
    <name evidence="1" type="primary">recR</name>
    <name type="ordered locus">SG0691</name>
</gene>
<organism>
    <name type="scientific">Sodalis glossinidius (strain morsitans)</name>
    <dbReference type="NCBI Taxonomy" id="343509"/>
    <lineage>
        <taxon>Bacteria</taxon>
        <taxon>Pseudomonadati</taxon>
        <taxon>Pseudomonadota</taxon>
        <taxon>Gammaproteobacteria</taxon>
        <taxon>Enterobacterales</taxon>
        <taxon>Bruguierivoracaceae</taxon>
        <taxon>Sodalis</taxon>
    </lineage>
</organism>
<dbReference type="EMBL" id="AP008232">
    <property type="protein sequence ID" value="BAE73966.1"/>
    <property type="molecule type" value="Genomic_DNA"/>
</dbReference>
<dbReference type="RefSeq" id="WP_011410554.1">
    <property type="nucleotide sequence ID" value="NC_007712.1"/>
</dbReference>
<dbReference type="SMR" id="Q2NV59"/>
<dbReference type="STRING" id="343509.SG0691"/>
<dbReference type="KEGG" id="sgl:SG0691"/>
<dbReference type="eggNOG" id="COG0353">
    <property type="taxonomic scope" value="Bacteria"/>
</dbReference>
<dbReference type="HOGENOM" id="CLU_060739_1_2_6"/>
<dbReference type="OrthoDB" id="9802672at2"/>
<dbReference type="BioCyc" id="SGLO343509:SGP1_RS05885-MONOMER"/>
<dbReference type="Proteomes" id="UP000001932">
    <property type="component" value="Chromosome"/>
</dbReference>
<dbReference type="GO" id="GO:0003677">
    <property type="term" value="F:DNA binding"/>
    <property type="evidence" value="ECO:0007669"/>
    <property type="project" value="UniProtKB-UniRule"/>
</dbReference>
<dbReference type="GO" id="GO:0008270">
    <property type="term" value="F:zinc ion binding"/>
    <property type="evidence" value="ECO:0007669"/>
    <property type="project" value="UniProtKB-KW"/>
</dbReference>
<dbReference type="GO" id="GO:0006310">
    <property type="term" value="P:DNA recombination"/>
    <property type="evidence" value="ECO:0007669"/>
    <property type="project" value="UniProtKB-UniRule"/>
</dbReference>
<dbReference type="GO" id="GO:0006281">
    <property type="term" value="P:DNA repair"/>
    <property type="evidence" value="ECO:0007669"/>
    <property type="project" value="UniProtKB-UniRule"/>
</dbReference>
<dbReference type="CDD" id="cd01025">
    <property type="entry name" value="TOPRIM_recR"/>
    <property type="match status" value="1"/>
</dbReference>
<dbReference type="FunFam" id="1.10.8.420:FF:000001">
    <property type="entry name" value="Recombination protein RecR"/>
    <property type="match status" value="1"/>
</dbReference>
<dbReference type="FunFam" id="3.40.1360.10:FF:000001">
    <property type="entry name" value="Recombination protein RecR"/>
    <property type="match status" value="1"/>
</dbReference>
<dbReference type="Gene3D" id="3.40.1360.10">
    <property type="match status" value="1"/>
</dbReference>
<dbReference type="Gene3D" id="6.10.250.240">
    <property type="match status" value="1"/>
</dbReference>
<dbReference type="Gene3D" id="1.10.8.420">
    <property type="entry name" value="RecR Domain 1"/>
    <property type="match status" value="1"/>
</dbReference>
<dbReference type="HAMAP" id="MF_00017">
    <property type="entry name" value="RecR"/>
    <property type="match status" value="1"/>
</dbReference>
<dbReference type="InterPro" id="IPR000093">
    <property type="entry name" value="DNA_Rcmb_RecR"/>
</dbReference>
<dbReference type="InterPro" id="IPR023627">
    <property type="entry name" value="Rcmb_RecR"/>
</dbReference>
<dbReference type="InterPro" id="IPR015967">
    <property type="entry name" value="Rcmb_RecR_Znf"/>
</dbReference>
<dbReference type="InterPro" id="IPR006171">
    <property type="entry name" value="TOPRIM_dom"/>
</dbReference>
<dbReference type="InterPro" id="IPR034137">
    <property type="entry name" value="TOPRIM_RecR"/>
</dbReference>
<dbReference type="NCBIfam" id="TIGR00615">
    <property type="entry name" value="recR"/>
    <property type="match status" value="1"/>
</dbReference>
<dbReference type="PANTHER" id="PTHR30446">
    <property type="entry name" value="RECOMBINATION PROTEIN RECR"/>
    <property type="match status" value="1"/>
</dbReference>
<dbReference type="PANTHER" id="PTHR30446:SF0">
    <property type="entry name" value="RECOMBINATION PROTEIN RECR"/>
    <property type="match status" value="1"/>
</dbReference>
<dbReference type="Pfam" id="PF21175">
    <property type="entry name" value="RecR_C"/>
    <property type="match status" value="1"/>
</dbReference>
<dbReference type="Pfam" id="PF21176">
    <property type="entry name" value="RecR_HhH"/>
    <property type="match status" value="1"/>
</dbReference>
<dbReference type="Pfam" id="PF02132">
    <property type="entry name" value="RecR_ZnF"/>
    <property type="match status" value="1"/>
</dbReference>
<dbReference type="Pfam" id="PF13662">
    <property type="entry name" value="Toprim_4"/>
    <property type="match status" value="1"/>
</dbReference>
<dbReference type="SMART" id="SM00493">
    <property type="entry name" value="TOPRIM"/>
    <property type="match status" value="1"/>
</dbReference>
<dbReference type="SUPFAM" id="SSF111304">
    <property type="entry name" value="Recombination protein RecR"/>
    <property type="match status" value="1"/>
</dbReference>
<dbReference type="PROSITE" id="PS01300">
    <property type="entry name" value="RECR"/>
    <property type="match status" value="1"/>
</dbReference>
<dbReference type="PROSITE" id="PS50880">
    <property type="entry name" value="TOPRIM"/>
    <property type="match status" value="1"/>
</dbReference>
<reference key="1">
    <citation type="journal article" date="2006" name="Genome Res.">
        <title>Massive genome erosion and functional adaptations provide insights into the symbiotic lifestyle of Sodalis glossinidius in the tsetse host.</title>
        <authorList>
            <person name="Toh H."/>
            <person name="Weiss B.L."/>
            <person name="Perkin S.A.H."/>
            <person name="Yamashita A."/>
            <person name="Oshima K."/>
            <person name="Hattori M."/>
            <person name="Aksoy S."/>
        </authorList>
    </citation>
    <scope>NUCLEOTIDE SEQUENCE [LARGE SCALE GENOMIC DNA]</scope>
    <source>
        <strain>morsitans</strain>
    </source>
</reference>
<sequence length="201" mass="21652">MQTSPLLEALTEALRCLPGVGPKSAQRMVFHLLQRDRSGGMRLAQALTRAMSEIGHCADCRTFTEQPVCTICANPRRQQSGQICVVESPADIHAIEQTGQFAGSYFVLMGHLSPLDGIGPDDIGLGRLQERLENESIEEVILATNPTVEGEATANYIAEMCAHYGVMASRIAHGVPVGGELEMVDGTTLSHSLAGRHPIKF</sequence>
<keyword id="KW-0227">DNA damage</keyword>
<keyword id="KW-0233">DNA recombination</keyword>
<keyword id="KW-0234">DNA repair</keyword>
<keyword id="KW-0479">Metal-binding</keyword>
<keyword id="KW-0862">Zinc</keyword>
<keyword id="KW-0863">Zinc-finger</keyword>
<comment type="function">
    <text evidence="1">May play a role in DNA repair. It seems to be involved in an RecBC-independent recombinational process of DNA repair. It may act with RecF and RecO.</text>
</comment>
<comment type="similarity">
    <text evidence="1">Belongs to the RecR family.</text>
</comment>
<accession>Q2NV59</accession>
<feature type="chain" id="PRO_1000001616" description="Recombination protein RecR">
    <location>
        <begin position="1"/>
        <end position="201"/>
    </location>
</feature>
<feature type="domain" description="Toprim" evidence="1">
    <location>
        <begin position="81"/>
        <end position="176"/>
    </location>
</feature>
<feature type="zinc finger region" description="C4-type" evidence="1">
    <location>
        <begin position="57"/>
        <end position="72"/>
    </location>
</feature>
<evidence type="ECO:0000255" key="1">
    <source>
        <dbReference type="HAMAP-Rule" id="MF_00017"/>
    </source>
</evidence>
<protein>
    <recommendedName>
        <fullName evidence="1">Recombination protein RecR</fullName>
    </recommendedName>
</protein>